<sequence>MPDRGGGPPTGPRIRVGRPSRRVRTLLLTLGVLAVLAMAFTMFAGFWTDWLWYRSVHYSSVFTTTLWTKIGLFFVFGLLMALAVGFNIWLAHRLRPPLSAMSMEQQNLDRYRMGIAPYKKWLLLGITALVGLIAGASASGQWRTWLMWVNGVPFGQKDPQFKLDVSFYAFDLPWYRFLLGFGFAAVIISVIAAALTHYLYGGLRVTSPGARATAAATGHLSVLLGVFVALKAVAYWLDRYGLAVKSSDFKATDNWTGLRYVDANAYLPAKTILFCIAVICALLFFATLWRRTWQLPVIGFGLMVLSAILIGGLYPALVQKFQVQPNEQAKEAPYVEKNLAATRDAYGIEGTQVAEYPGKSETKDKTKLRDDADAAASVRIMDPNIISPTFQQLQQMRNYYAFPTNLDVDRYAKDGKDQDTVIGLRELNLAGIPKKNWINNHFRYTHGYGVVAAKGTQVDSEGRPVFTESNLPSEGDLGKYEQRIYYGEKTTTYSIVGGPQKEIDYSDDTGEKTFSYKGDGGVDLSNPINRAAYAAAFSEPQILYSGAIGDGSRILYNRTPKERVEAVAPWLTIDGDAYPAVVDGRIQWIVDAYTTTNGYPYASRTTLGDTTADSLTANNNSRAVVAQQNQVNYIRNSVKATVDAYSGDVKLYEWDTQDPVLKTWKKAFPGTVQDKGEISKELMAHLRYPQDLFKVQRELLTRYHVKDANTFLSGSEVWQVPDDPTNKSGDAVPPYYLSMKMPDQKAQAFSLTTTFTPNGRDNLSAFMAVDAEAGTSDYGKIRILKLPTSTTVDGPKQVQSQFNSEQDIAESIRLLRGGDSEVEYGNLLTVPLDGGLLYVEPVYVRGGDLKYPLLRKVLVSYGGNTAFENTLDAALNKVFGAQAAETEQPPDEGDDTTEPPPTSTNPTVREALSDAQKAFDAGQKALEQKDLAAYAEAQKDLEEALQRAEDAQAKADQGAGGKNGDDKNAGDKNSGDKAGSDKAGPDATPTGDAGGGADTG</sequence>
<keyword id="KW-1003">Cell membrane</keyword>
<keyword id="KW-0472">Membrane</keyword>
<keyword id="KW-1185">Reference proteome</keyword>
<keyword id="KW-0812">Transmembrane</keyword>
<keyword id="KW-1133">Transmembrane helix</keyword>
<comment type="subcellular location">
    <subcellularLocation>
        <location evidence="1">Cell membrane</location>
        <topology evidence="1">Multi-pass membrane protein</topology>
    </subcellularLocation>
</comment>
<comment type="similarity">
    <text evidence="1">Belongs to the UPF0182 family.</text>
</comment>
<gene>
    <name type="ordered locus">SCO5204</name>
    <name type="ORF">2SC3B6.28</name>
    <name type="ORF">SC7E4.01</name>
</gene>
<dbReference type="EMBL" id="AL939122">
    <property type="protein sequence ID" value="CAD55225.1"/>
    <property type="molecule type" value="Genomic_DNA"/>
</dbReference>
<dbReference type="RefSeq" id="NP_733657.1">
    <property type="nucleotide sequence ID" value="NC_003888.3"/>
</dbReference>
<dbReference type="RefSeq" id="WP_003973771.1">
    <property type="nucleotide sequence ID" value="NZ_VNID01000008.1"/>
</dbReference>
<dbReference type="SMR" id="Q9FCI4"/>
<dbReference type="STRING" id="100226.gene:17762853"/>
<dbReference type="PaxDb" id="100226-SCO5204"/>
<dbReference type="KEGG" id="sco:SCO5204"/>
<dbReference type="PATRIC" id="fig|100226.15.peg.5287"/>
<dbReference type="eggNOG" id="COG1615">
    <property type="taxonomic scope" value="Bacteria"/>
</dbReference>
<dbReference type="HOGENOM" id="CLU_007733_1_0_11"/>
<dbReference type="InParanoid" id="Q9FCI4"/>
<dbReference type="OrthoDB" id="9763654at2"/>
<dbReference type="PhylomeDB" id="Q9FCI4"/>
<dbReference type="Proteomes" id="UP000001973">
    <property type="component" value="Chromosome"/>
</dbReference>
<dbReference type="GO" id="GO:0005886">
    <property type="term" value="C:plasma membrane"/>
    <property type="evidence" value="ECO:0007669"/>
    <property type="project" value="UniProtKB-SubCell"/>
</dbReference>
<dbReference type="HAMAP" id="MF_01600">
    <property type="entry name" value="UPF0182"/>
    <property type="match status" value="1"/>
</dbReference>
<dbReference type="InterPro" id="IPR005372">
    <property type="entry name" value="UPF0182"/>
</dbReference>
<dbReference type="PANTHER" id="PTHR39344">
    <property type="entry name" value="UPF0182 PROTEIN SLL1060"/>
    <property type="match status" value="1"/>
</dbReference>
<dbReference type="PANTHER" id="PTHR39344:SF1">
    <property type="entry name" value="UPF0182 PROTEIN SLL1060"/>
    <property type="match status" value="1"/>
</dbReference>
<dbReference type="Pfam" id="PF03699">
    <property type="entry name" value="UPF0182"/>
    <property type="match status" value="1"/>
</dbReference>
<protein>
    <recommendedName>
        <fullName evidence="1">UPF0182 protein SCO5204</fullName>
    </recommendedName>
</protein>
<organism>
    <name type="scientific">Streptomyces coelicolor (strain ATCC BAA-471 / A3(2) / M145)</name>
    <dbReference type="NCBI Taxonomy" id="100226"/>
    <lineage>
        <taxon>Bacteria</taxon>
        <taxon>Bacillati</taxon>
        <taxon>Actinomycetota</taxon>
        <taxon>Actinomycetes</taxon>
        <taxon>Kitasatosporales</taxon>
        <taxon>Streptomycetaceae</taxon>
        <taxon>Streptomyces</taxon>
        <taxon>Streptomyces albidoflavus group</taxon>
    </lineage>
</organism>
<accession>Q9FCI4</accession>
<accession>Q9K4B4</accession>
<feature type="chain" id="PRO_0000157728" description="UPF0182 protein SCO5204">
    <location>
        <begin position="1"/>
        <end position="1000"/>
    </location>
</feature>
<feature type="transmembrane region" description="Helical" evidence="1">
    <location>
        <begin position="26"/>
        <end position="48"/>
    </location>
</feature>
<feature type="transmembrane region" description="Helical" evidence="1">
    <location>
        <begin position="70"/>
        <end position="92"/>
    </location>
</feature>
<feature type="transmembrane region" description="Helical" evidence="1">
    <location>
        <begin position="121"/>
        <end position="143"/>
    </location>
</feature>
<feature type="transmembrane region" description="Helical" evidence="1">
    <location>
        <begin position="177"/>
        <end position="199"/>
    </location>
</feature>
<feature type="transmembrane region" description="Helical" evidence="1">
    <location>
        <begin position="220"/>
        <end position="237"/>
    </location>
</feature>
<feature type="transmembrane region" description="Helical" evidence="1">
    <location>
        <begin position="267"/>
        <end position="289"/>
    </location>
</feature>
<feature type="transmembrane region" description="Helical" evidence="1">
    <location>
        <begin position="296"/>
        <end position="318"/>
    </location>
</feature>
<feature type="region of interest" description="Disordered" evidence="2">
    <location>
        <begin position="884"/>
        <end position="908"/>
    </location>
</feature>
<feature type="region of interest" description="Disordered" evidence="2">
    <location>
        <begin position="943"/>
        <end position="1000"/>
    </location>
</feature>
<feature type="compositionally biased region" description="Acidic residues" evidence="2">
    <location>
        <begin position="888"/>
        <end position="897"/>
    </location>
</feature>
<feature type="compositionally biased region" description="Basic and acidic residues" evidence="2">
    <location>
        <begin position="943"/>
        <end position="953"/>
    </location>
</feature>
<feature type="compositionally biased region" description="Basic and acidic residues" evidence="2">
    <location>
        <begin position="963"/>
        <end position="984"/>
    </location>
</feature>
<reference key="1">
    <citation type="journal article" date="2002" name="Nature">
        <title>Complete genome sequence of the model actinomycete Streptomyces coelicolor A3(2).</title>
        <authorList>
            <person name="Bentley S.D."/>
            <person name="Chater K.F."/>
            <person name="Cerdeno-Tarraga A.-M."/>
            <person name="Challis G.L."/>
            <person name="Thomson N.R."/>
            <person name="James K.D."/>
            <person name="Harris D.E."/>
            <person name="Quail M.A."/>
            <person name="Kieser H."/>
            <person name="Harper D."/>
            <person name="Bateman A."/>
            <person name="Brown S."/>
            <person name="Chandra G."/>
            <person name="Chen C.W."/>
            <person name="Collins M."/>
            <person name="Cronin A."/>
            <person name="Fraser A."/>
            <person name="Goble A."/>
            <person name="Hidalgo J."/>
            <person name="Hornsby T."/>
            <person name="Howarth S."/>
            <person name="Huang C.-H."/>
            <person name="Kieser T."/>
            <person name="Larke L."/>
            <person name="Murphy L.D."/>
            <person name="Oliver K."/>
            <person name="O'Neil S."/>
            <person name="Rabbinowitsch E."/>
            <person name="Rajandream M.A."/>
            <person name="Rutherford K.M."/>
            <person name="Rutter S."/>
            <person name="Seeger K."/>
            <person name="Saunders D."/>
            <person name="Sharp S."/>
            <person name="Squares R."/>
            <person name="Squares S."/>
            <person name="Taylor K."/>
            <person name="Warren T."/>
            <person name="Wietzorrek A."/>
            <person name="Woodward J.R."/>
            <person name="Barrell B.G."/>
            <person name="Parkhill J."/>
            <person name="Hopwood D.A."/>
        </authorList>
    </citation>
    <scope>NUCLEOTIDE SEQUENCE [LARGE SCALE GENOMIC DNA]</scope>
    <source>
        <strain>ATCC BAA-471 / A3(2) / M145</strain>
    </source>
</reference>
<proteinExistence type="inferred from homology"/>
<evidence type="ECO:0000255" key="1">
    <source>
        <dbReference type="HAMAP-Rule" id="MF_01600"/>
    </source>
</evidence>
<evidence type="ECO:0000256" key="2">
    <source>
        <dbReference type="SAM" id="MobiDB-lite"/>
    </source>
</evidence>
<name>Y5204_STRCO</name>